<keyword id="KW-0903">Direct protein sequencing</keyword>
<keyword id="KW-0413">Isomerase</keyword>
<keyword id="KW-1185">Reference proteome</keyword>
<keyword id="KW-0697">Rotamase</keyword>
<reference key="1">
    <citation type="journal article" date="1996" name="DNA Res.">
        <title>Sequence analysis of the genome of the unicellular cyanobacterium Synechocystis sp. strain PCC6803. II. Sequence determination of the entire genome and assignment of potential protein-coding regions.</title>
        <authorList>
            <person name="Kaneko T."/>
            <person name="Sato S."/>
            <person name="Kotani H."/>
            <person name="Tanaka A."/>
            <person name="Asamizu E."/>
            <person name="Nakamura Y."/>
            <person name="Miyajima N."/>
            <person name="Hirosawa M."/>
            <person name="Sugiura M."/>
            <person name="Sasamoto S."/>
            <person name="Kimura T."/>
            <person name="Hosouchi T."/>
            <person name="Matsuno A."/>
            <person name="Muraki A."/>
            <person name="Nakazaki N."/>
            <person name="Naruo K."/>
            <person name="Okumura S."/>
            <person name="Shimpo S."/>
            <person name="Takeuchi C."/>
            <person name="Wada T."/>
            <person name="Watanabe A."/>
            <person name="Yamada M."/>
            <person name="Yasuda M."/>
            <person name="Tabata S."/>
        </authorList>
    </citation>
    <scope>NUCLEOTIDE SEQUENCE [LARGE SCALE GENOMIC DNA]</scope>
    <source>
        <strain>ATCC 27184 / PCC 6803 / Kazusa</strain>
    </source>
</reference>
<reference key="2">
    <citation type="journal article" date="1997" name="Electrophoresis">
        <title>Towards a proteome project of cyanobacterium Synechocystis sp. strain PCC6803: linking 130 protein spots with their respective genes.</title>
        <authorList>
            <person name="Sazuka T."/>
            <person name="Ohara O."/>
        </authorList>
    </citation>
    <scope>PROTEIN SEQUENCE OF 3-19</scope>
</reference>
<dbReference type="EC" id="5.2.1.8"/>
<dbReference type="EMBL" id="BA000022">
    <property type="protein sequence ID" value="BAA17841.1"/>
    <property type="molecule type" value="Genomic_DNA"/>
</dbReference>
<dbReference type="PIR" id="S74880">
    <property type="entry name" value="S74880"/>
</dbReference>
<dbReference type="SMR" id="P73789"/>
<dbReference type="STRING" id="1148.gene:10498709"/>
<dbReference type="PaxDb" id="1148-1652923"/>
<dbReference type="EnsemblBacteria" id="BAA17841">
    <property type="protein sequence ID" value="BAA17841"/>
    <property type="gene ID" value="BAA17841"/>
</dbReference>
<dbReference type="KEGG" id="syn:slr1251"/>
<dbReference type="eggNOG" id="COG0652">
    <property type="taxonomic scope" value="Bacteria"/>
</dbReference>
<dbReference type="InParanoid" id="P73789"/>
<dbReference type="PhylomeDB" id="P73789"/>
<dbReference type="Proteomes" id="UP000001425">
    <property type="component" value="Chromosome"/>
</dbReference>
<dbReference type="GO" id="GO:0005737">
    <property type="term" value="C:cytoplasm"/>
    <property type="evidence" value="ECO:0000318"/>
    <property type="project" value="GO_Central"/>
</dbReference>
<dbReference type="GO" id="GO:0016018">
    <property type="term" value="F:cyclosporin A binding"/>
    <property type="evidence" value="ECO:0000318"/>
    <property type="project" value="GO_Central"/>
</dbReference>
<dbReference type="GO" id="GO:0003755">
    <property type="term" value="F:peptidyl-prolyl cis-trans isomerase activity"/>
    <property type="evidence" value="ECO:0000318"/>
    <property type="project" value="GO_Central"/>
</dbReference>
<dbReference type="GO" id="GO:0006457">
    <property type="term" value="P:protein folding"/>
    <property type="evidence" value="ECO:0000318"/>
    <property type="project" value="GO_Central"/>
</dbReference>
<dbReference type="CDD" id="cd01926">
    <property type="entry name" value="cyclophilin_ABH_like"/>
    <property type="match status" value="1"/>
</dbReference>
<dbReference type="FunFam" id="2.40.100.10:FF:000002">
    <property type="entry name" value="Peptidyl-prolyl cis-trans isomerase"/>
    <property type="match status" value="1"/>
</dbReference>
<dbReference type="Gene3D" id="2.40.100.10">
    <property type="entry name" value="Cyclophilin-like"/>
    <property type="match status" value="1"/>
</dbReference>
<dbReference type="InterPro" id="IPR029000">
    <property type="entry name" value="Cyclophilin-like_dom_sf"/>
</dbReference>
<dbReference type="InterPro" id="IPR024936">
    <property type="entry name" value="Cyclophilin-type_PPIase"/>
</dbReference>
<dbReference type="InterPro" id="IPR020892">
    <property type="entry name" value="Cyclophilin-type_PPIase_CS"/>
</dbReference>
<dbReference type="InterPro" id="IPR002130">
    <property type="entry name" value="Cyclophilin-type_PPIase_dom"/>
</dbReference>
<dbReference type="PANTHER" id="PTHR11071">
    <property type="entry name" value="PEPTIDYL-PROLYL CIS-TRANS ISOMERASE"/>
    <property type="match status" value="1"/>
</dbReference>
<dbReference type="PANTHER" id="PTHR11071:SF561">
    <property type="entry name" value="PEPTIDYL-PROLYL CIS-TRANS ISOMERASE D-RELATED"/>
    <property type="match status" value="1"/>
</dbReference>
<dbReference type="Pfam" id="PF00160">
    <property type="entry name" value="Pro_isomerase"/>
    <property type="match status" value="1"/>
</dbReference>
<dbReference type="PIRSF" id="PIRSF001467">
    <property type="entry name" value="Peptidylpro_ismrse"/>
    <property type="match status" value="1"/>
</dbReference>
<dbReference type="PRINTS" id="PR00153">
    <property type="entry name" value="CSAPPISMRASE"/>
</dbReference>
<dbReference type="SUPFAM" id="SSF50891">
    <property type="entry name" value="Cyclophilin-like"/>
    <property type="match status" value="1"/>
</dbReference>
<dbReference type="PROSITE" id="PS00170">
    <property type="entry name" value="CSA_PPIASE_1"/>
    <property type="match status" value="1"/>
</dbReference>
<dbReference type="PROSITE" id="PS50072">
    <property type="entry name" value="CSA_PPIASE_2"/>
    <property type="match status" value="1"/>
</dbReference>
<evidence type="ECO:0000255" key="1">
    <source>
        <dbReference type="PROSITE-ProRule" id="PRU00156"/>
    </source>
</evidence>
<evidence type="ECO:0000305" key="2"/>
<accession>P73789</accession>
<proteinExistence type="evidence at protein level"/>
<gene>
    <name type="ordered locus">slr1251</name>
</gene>
<sequence>MMSKVFFDITIGSDTAGRIVMELFDEVTPKTAENFRALCTGEKGVGKAGKPLHFKGSHFHRVITDFMAQGGDFTRGNGTGGESIYGEKFADENFQLKHDRPGLLSMANAGPNTNGSQFFLTFVPCPWLDGKHVVFGEVVEGLEILEQLEANGSQSGQTKQAIVISDCGEIK</sequence>
<feature type="chain" id="PRO_0000064214" description="Peptidyl-prolyl cis-trans isomerase slr1251">
    <location>
        <begin position="1"/>
        <end position="171"/>
    </location>
</feature>
<feature type="domain" description="PPIase cyclophilin-type" evidence="1">
    <location>
        <begin position="6"/>
        <end position="169"/>
    </location>
</feature>
<protein>
    <recommendedName>
        <fullName>Peptidyl-prolyl cis-trans isomerase slr1251</fullName>
        <shortName>PPIase slr1251</shortName>
        <ecNumber>5.2.1.8</ecNumber>
    </recommendedName>
    <alternativeName>
        <fullName>Rotamase slr1251</fullName>
    </alternativeName>
</protein>
<comment type="function">
    <text>PPIases accelerate the folding of proteins. It catalyzes the cis-trans isomerization of proline imidic peptide bonds in oligopeptides.</text>
</comment>
<comment type="catalytic activity">
    <reaction>
        <text>[protein]-peptidylproline (omega=180) = [protein]-peptidylproline (omega=0)</text>
        <dbReference type="Rhea" id="RHEA:16237"/>
        <dbReference type="Rhea" id="RHEA-COMP:10747"/>
        <dbReference type="Rhea" id="RHEA-COMP:10748"/>
        <dbReference type="ChEBI" id="CHEBI:83833"/>
        <dbReference type="ChEBI" id="CHEBI:83834"/>
        <dbReference type="EC" id="5.2.1.8"/>
    </reaction>
</comment>
<comment type="similarity">
    <text evidence="2">Belongs to the cyclophilin-type PPIase family.</text>
</comment>
<name>PPI2_SYNY3</name>
<organism>
    <name type="scientific">Synechocystis sp. (strain ATCC 27184 / PCC 6803 / Kazusa)</name>
    <dbReference type="NCBI Taxonomy" id="1111708"/>
    <lineage>
        <taxon>Bacteria</taxon>
        <taxon>Bacillati</taxon>
        <taxon>Cyanobacteriota</taxon>
        <taxon>Cyanophyceae</taxon>
        <taxon>Synechococcales</taxon>
        <taxon>Merismopediaceae</taxon>
        <taxon>Synechocystis</taxon>
    </lineage>
</organism>